<reference key="1">
    <citation type="submission" date="2005-01" db="EMBL/GenBank/DDBJ databases">
        <title>Bovine tropomyosin isoforms.</title>
        <authorList>
            <person name="Oe M."/>
            <person name="Nakajima I."/>
            <person name="Muroya S."/>
            <person name="Chikuni K."/>
        </authorList>
    </citation>
    <scope>NUCLEOTIDE SEQUENCE [MRNA] (ISOFORM 1)</scope>
    <source>
        <tissue>Skeletal muscle</tissue>
    </source>
</reference>
<reference key="2">
    <citation type="submission" date="2005-10" db="EMBL/GenBank/DDBJ databases">
        <authorList>
            <consortium name="NIH - Mammalian Gene Collection (MGC) project"/>
        </authorList>
    </citation>
    <scope>NUCLEOTIDE SEQUENCE [LARGE SCALE MRNA] (ISOFORM 2)</scope>
    <source>
        <strain>Crossbred X Angus</strain>
        <tissue>Ileum</tissue>
    </source>
</reference>
<feature type="chain" id="PRO_0000289991" description="Tropomyosin alpha-3 chain">
    <location>
        <begin position="1"/>
        <end position="284"/>
    </location>
</feature>
<feature type="region of interest" description="Disordered" evidence="10">
    <location>
        <begin position="1"/>
        <end position="43"/>
    </location>
</feature>
<feature type="coiled-coil region" evidence="1">
    <location>
        <begin position="1"/>
        <end position="284"/>
    </location>
</feature>
<feature type="compositionally biased region" description="Basic and acidic residues" evidence="10">
    <location>
        <begin position="12"/>
        <end position="40"/>
    </location>
</feature>
<feature type="modified residue" description="N-acetylmethionine" evidence="9">
    <location>
        <position position="1"/>
    </location>
</feature>
<feature type="modified residue" description="Phosphothreonine" evidence="4">
    <location>
        <position position="53"/>
    </location>
</feature>
<feature type="modified residue" description="Phosphoserine" evidence="7">
    <location>
        <position position="61"/>
    </location>
</feature>
<feature type="modified residue" description="Phosphoserine" evidence="3">
    <location>
        <position position="87"/>
    </location>
</feature>
<feature type="modified residue" description="Phosphothreonine" evidence="4">
    <location>
        <position position="108"/>
    </location>
</feature>
<feature type="modified residue" description="Phosphoserine" evidence="4">
    <location>
        <position position="206"/>
    </location>
</feature>
<feature type="modified residue" description="Phosphoserine" evidence="8">
    <location>
        <position position="215"/>
    </location>
</feature>
<feature type="modified residue" description="Phosphothreonine" evidence="4">
    <location>
        <position position="252"/>
    </location>
</feature>
<feature type="modified residue" description="Phosphotyrosine" evidence="8">
    <location>
        <position position="261"/>
    </location>
</feature>
<feature type="modified residue" description="Phosphoserine" evidence="6">
    <location>
        <position position="271"/>
    </location>
</feature>
<feature type="modified residue" description="Phosphothreonine" evidence="4">
    <location>
        <position position="282"/>
    </location>
</feature>
<feature type="modified residue" description="Phosphoserine" evidence="6">
    <location>
        <position position="283"/>
    </location>
</feature>
<feature type="splice variant" id="VSP_026081" description="In isoform 2." evidence="11">
    <original>MEAIKKKMQMLKLDKENALDRAEQAEAEQKQAEERSKQLEDELAAMQKKLKGTEDELDKYSEALKDAQEKLELAEKKAAD</original>
    <variation>MAGITTIEAVKRKIQVLQQQADDAEERAERLQREVEGERRAREQ</variation>
    <location>
        <begin position="1"/>
        <end position="80"/>
    </location>
</feature>
<feature type="splice variant" id="VSP_026082" description="In isoform 2." evidence="11">
    <original>KCSELEEELKNVTNNLKSLEAQA</original>
    <variation>RCREMDEQIRLMDQNLKCLSAAE</variation>
    <location>
        <begin position="189"/>
        <end position="211"/>
    </location>
</feature>
<feature type="splice variant" id="VSP_026083" description="In isoform 2." evidence="11">
    <original>ELYAQKLKYKAISEELDHALNDMTSI</original>
    <variation>KLKCTKEEHLCTQRMLDQTLLDLNEM</variation>
    <location>
        <begin position="259"/>
        <end position="284"/>
    </location>
</feature>
<feature type="initiator methionine" description="Removed" evidence="1">
    <location sequence="Q5KR47-2">
        <position position="1"/>
    </location>
</feature>
<feature type="modified residue" description="N-acetylalanine" evidence="12">
    <location sequence="Q5KR47-2">
        <position position="2"/>
    </location>
</feature>
<feature type="modified residue" description="N6-acetyllysine" evidence="1">
    <location sequence="Q5KR47-2">
        <position position="228"/>
    </location>
</feature>
<evidence type="ECO:0000250" key="1"/>
<evidence type="ECO:0000250" key="2">
    <source>
        <dbReference type="UniProtKB" id="P04692"/>
    </source>
</evidence>
<evidence type="ECO:0000250" key="3">
    <source>
        <dbReference type="UniProtKB" id="P06753"/>
    </source>
</evidence>
<evidence type="ECO:0000250" key="4">
    <source>
        <dbReference type="UniProtKB" id="P07951"/>
    </source>
</evidence>
<evidence type="ECO:0000250" key="5">
    <source>
        <dbReference type="UniProtKB" id="P09493"/>
    </source>
</evidence>
<evidence type="ECO:0000250" key="6">
    <source>
        <dbReference type="UniProtKB" id="P21107"/>
    </source>
</evidence>
<evidence type="ECO:0000250" key="7">
    <source>
        <dbReference type="UniProtKB" id="P58774"/>
    </source>
</evidence>
<evidence type="ECO:0000250" key="8">
    <source>
        <dbReference type="UniProtKB" id="P58775"/>
    </source>
</evidence>
<evidence type="ECO:0000250" key="9">
    <source>
        <dbReference type="UniProtKB" id="P58776"/>
    </source>
</evidence>
<evidence type="ECO:0000256" key="10">
    <source>
        <dbReference type="SAM" id="MobiDB-lite"/>
    </source>
</evidence>
<evidence type="ECO:0000303" key="11">
    <source ref="2"/>
</evidence>
<evidence type="ECO:0000305" key="12"/>
<name>TPM3_BOVIN</name>
<protein>
    <recommendedName>
        <fullName>Tropomyosin alpha-3 chain</fullName>
    </recommendedName>
    <alternativeName>
        <fullName>Gamma-tropomyosin</fullName>
    </alternativeName>
    <alternativeName>
        <fullName>Tropomyosin-3</fullName>
    </alternativeName>
</protein>
<gene>
    <name type="primary">TPM3</name>
</gene>
<accession>Q5KR47</accession>
<accession>Q32PI2</accession>
<proteinExistence type="evidence at transcript level"/>
<keyword id="KW-0007">Acetylation</keyword>
<keyword id="KW-0009">Actin-binding</keyword>
<keyword id="KW-0025">Alternative splicing</keyword>
<keyword id="KW-0175">Coiled coil</keyword>
<keyword id="KW-0963">Cytoplasm</keyword>
<keyword id="KW-0206">Cytoskeleton</keyword>
<keyword id="KW-0514">Muscle protein</keyword>
<keyword id="KW-0597">Phosphoprotein</keyword>
<keyword id="KW-1185">Reference proteome</keyword>
<organism>
    <name type="scientific">Bos taurus</name>
    <name type="common">Bovine</name>
    <dbReference type="NCBI Taxonomy" id="9913"/>
    <lineage>
        <taxon>Eukaryota</taxon>
        <taxon>Metazoa</taxon>
        <taxon>Chordata</taxon>
        <taxon>Craniata</taxon>
        <taxon>Vertebrata</taxon>
        <taxon>Euteleostomi</taxon>
        <taxon>Mammalia</taxon>
        <taxon>Eutheria</taxon>
        <taxon>Laurasiatheria</taxon>
        <taxon>Artiodactyla</taxon>
        <taxon>Ruminantia</taxon>
        <taxon>Pecora</taxon>
        <taxon>Bovidae</taxon>
        <taxon>Bovinae</taxon>
        <taxon>Bos</taxon>
    </lineage>
</organism>
<dbReference type="EMBL" id="AB198072">
    <property type="protein sequence ID" value="BAD86592.1"/>
    <property type="molecule type" value="mRNA"/>
</dbReference>
<dbReference type="EMBL" id="BC108106">
    <property type="protein sequence ID" value="AAI08107.1"/>
    <property type="molecule type" value="mRNA"/>
</dbReference>
<dbReference type="RefSeq" id="NP_001011674.1">
    <molecule id="Q5KR47-1"/>
    <property type="nucleotide sequence ID" value="NM_001011674.1"/>
</dbReference>
<dbReference type="RefSeq" id="XP_005203687.1">
    <molecule id="Q5KR47-1"/>
    <property type="nucleotide sequence ID" value="XM_005203630.5"/>
</dbReference>
<dbReference type="RefSeq" id="XP_005203696.1">
    <molecule id="Q5KR47-2"/>
    <property type="nucleotide sequence ID" value="XM_005203639.5"/>
</dbReference>
<dbReference type="SMR" id="Q5KR47"/>
<dbReference type="FunCoup" id="Q5KR47">
    <property type="interactions" value="742"/>
</dbReference>
<dbReference type="STRING" id="9913.ENSBTAP00000013077"/>
<dbReference type="PaxDb" id="9913-ENSBTAP00000013077"/>
<dbReference type="PeptideAtlas" id="Q5KR47"/>
<dbReference type="Ensembl" id="ENSBTAT00000047197.2">
    <molecule id="Q5KR47-2"/>
    <property type="protein sequence ID" value="ENSBTAP00000044420.1"/>
    <property type="gene ID" value="ENSBTAG00000033217.4"/>
</dbReference>
<dbReference type="GeneID" id="497019"/>
<dbReference type="KEGG" id="bta:497019"/>
<dbReference type="CTD" id="7170"/>
<dbReference type="VEuPathDB" id="HostDB:ENSBTAG00000033217"/>
<dbReference type="eggNOG" id="KOG1003">
    <property type="taxonomic scope" value="Eukaryota"/>
</dbReference>
<dbReference type="GeneTree" id="ENSGT01030000234542"/>
<dbReference type="HOGENOM" id="CLU_055027_0_0_1"/>
<dbReference type="InParanoid" id="Q5KR47"/>
<dbReference type="OMA" id="EKKAADX"/>
<dbReference type="OrthoDB" id="128924at2759"/>
<dbReference type="TreeFam" id="TF351519"/>
<dbReference type="Reactome" id="R-BTA-390522">
    <property type="pathway name" value="Striated Muscle Contraction"/>
</dbReference>
<dbReference type="Reactome" id="R-BTA-445355">
    <property type="pathway name" value="Smooth Muscle Contraction"/>
</dbReference>
<dbReference type="Reactome" id="R-BTA-9013424">
    <property type="pathway name" value="RHOV GTPase cycle"/>
</dbReference>
<dbReference type="Proteomes" id="UP000009136">
    <property type="component" value="Chromosome 3"/>
</dbReference>
<dbReference type="Bgee" id="ENSBTAG00000033217">
    <property type="expression patterns" value="Expressed in gluteus medius and 104 other cell types or tissues"/>
</dbReference>
<dbReference type="GO" id="GO:0005884">
    <property type="term" value="C:actin filament"/>
    <property type="evidence" value="ECO:0000318"/>
    <property type="project" value="GO_Central"/>
</dbReference>
<dbReference type="GO" id="GO:0005737">
    <property type="term" value="C:cytoplasm"/>
    <property type="evidence" value="ECO:0007669"/>
    <property type="project" value="UniProtKB-KW"/>
</dbReference>
<dbReference type="GO" id="GO:0051015">
    <property type="term" value="F:actin filament binding"/>
    <property type="evidence" value="ECO:0000318"/>
    <property type="project" value="GO_Central"/>
</dbReference>
<dbReference type="GO" id="GO:0007015">
    <property type="term" value="P:actin filament organization"/>
    <property type="evidence" value="ECO:0000318"/>
    <property type="project" value="GO_Central"/>
</dbReference>
<dbReference type="GO" id="GO:0006936">
    <property type="term" value="P:muscle contraction"/>
    <property type="evidence" value="ECO:0000318"/>
    <property type="project" value="GO_Central"/>
</dbReference>
<dbReference type="FunFam" id="1.20.5.170:FF:000005">
    <property type="entry name" value="Tropomyosin alpha-1 chain"/>
    <property type="match status" value="1"/>
</dbReference>
<dbReference type="FunFam" id="1.20.5.170:FF:000001">
    <property type="entry name" value="Tropomyosin alpha-1 chain isoform 1"/>
    <property type="match status" value="1"/>
</dbReference>
<dbReference type="FunFam" id="1.20.5.340:FF:000001">
    <property type="entry name" value="Tropomyosin alpha-1 chain isoform 2"/>
    <property type="match status" value="1"/>
</dbReference>
<dbReference type="Gene3D" id="1.20.5.170">
    <property type="match status" value="2"/>
</dbReference>
<dbReference type="Gene3D" id="1.20.5.340">
    <property type="match status" value="1"/>
</dbReference>
<dbReference type="InterPro" id="IPR000533">
    <property type="entry name" value="Tropomyosin"/>
</dbReference>
<dbReference type="PANTHER" id="PTHR19269">
    <property type="entry name" value="TROPOMYOSIN"/>
    <property type="match status" value="1"/>
</dbReference>
<dbReference type="Pfam" id="PF00261">
    <property type="entry name" value="Tropomyosin"/>
    <property type="match status" value="1"/>
</dbReference>
<dbReference type="PRINTS" id="PR00194">
    <property type="entry name" value="TROPOMYOSIN"/>
</dbReference>
<dbReference type="SUPFAM" id="SSF57997">
    <property type="entry name" value="Tropomyosin"/>
    <property type="match status" value="1"/>
</dbReference>
<dbReference type="PROSITE" id="PS00326">
    <property type="entry name" value="TROPOMYOSIN"/>
    <property type="match status" value="1"/>
</dbReference>
<comment type="function">
    <text evidence="5">Binds to actin filaments in muscle and non-muscle cells. Plays a central role, in association with the troponin complex, in the calcium dependent regulation of vertebrate striated muscle contraction. Smooth muscle contraction is regulated by interaction with caldesmon. In non-muscle cells is implicated in stabilizing cytoskeleton actin filaments.</text>
</comment>
<comment type="subunit">
    <text evidence="2 3">Homodimer. Heterodimer of an alpha (TPM1, TPM3 or TPM4) and a beta (TPM2) chain (By similarity). Interacts with TMOD1 (By similarity). Interacts with TNNT1 (By similarity).</text>
</comment>
<comment type="subcellular location">
    <molecule>Isoform 2</molecule>
    <subcellularLocation>
        <location evidence="1">Cytoplasm</location>
        <location evidence="1">Cytoskeleton</location>
    </subcellularLocation>
</comment>
<comment type="alternative products">
    <event type="alternative splicing"/>
    <isoform>
        <id>Q5KR47-1</id>
        <name>1</name>
        <name>Skeletal muscle</name>
        <sequence type="displayed"/>
    </isoform>
    <isoform>
        <id>Q5KR47-2</id>
        <name>2</name>
        <name>Cytoskeletal</name>
        <sequence type="described" ref="VSP_026081 VSP_026082 VSP_026083"/>
    </isoform>
</comment>
<comment type="domain">
    <text>The molecule is in a coiled coil structure that is formed by 2 polypeptide chains. The sequence exhibits a prominent seven-residues periodicity.</text>
</comment>
<comment type="similarity">
    <text evidence="12">Belongs to the tropomyosin family.</text>
</comment>
<sequence>MEAIKKKMQMLKLDKENALDRAEQAEAEQKQAEERSKQLEDELAAMQKKLKGTEDELDKYSEALKDAQEKLELAEKKAADAEAEVASLNRRIQLVEEELDRAQERLATALQKLEEAEKAADESERGMKVIENRALKDEEKMELQEIQLKEAKHIAEEADRKYEEVARKLVIIEGDLERTEERAELAESKCSELEEELKNVTNNLKSLEAQAEKYSQKEDKYEEEIKILTDKLKEAETRAEFAERSVAKLEKTIDDLEDELYAQKLKYKAISEELDHALNDMTSI</sequence>